<accession>P9WKW9</accession>
<accession>L0TGR6</accession>
<accession>P0A5H1</accession>
<accession>P72052</accession>
<reference key="1">
    <citation type="journal article" date="1998" name="Nature">
        <title>Deciphering the biology of Mycobacterium tuberculosis from the complete genome sequence.</title>
        <authorList>
            <person name="Cole S.T."/>
            <person name="Brosch R."/>
            <person name="Parkhill J."/>
            <person name="Garnier T."/>
            <person name="Churcher C.M."/>
            <person name="Harris D.E."/>
            <person name="Gordon S.V."/>
            <person name="Eiglmeier K."/>
            <person name="Gas S."/>
            <person name="Barry C.E. III"/>
            <person name="Tekaia F."/>
            <person name="Badcock K."/>
            <person name="Basham D."/>
            <person name="Brown D."/>
            <person name="Chillingworth T."/>
            <person name="Connor R."/>
            <person name="Davies R.M."/>
            <person name="Devlin K."/>
            <person name="Feltwell T."/>
            <person name="Gentles S."/>
            <person name="Hamlin N."/>
            <person name="Holroyd S."/>
            <person name="Hornsby T."/>
            <person name="Jagels K."/>
            <person name="Krogh A."/>
            <person name="McLean J."/>
            <person name="Moule S."/>
            <person name="Murphy L.D."/>
            <person name="Oliver S."/>
            <person name="Osborne J."/>
            <person name="Quail M.A."/>
            <person name="Rajandream M.A."/>
            <person name="Rogers J."/>
            <person name="Rutter S."/>
            <person name="Seeger K."/>
            <person name="Skelton S."/>
            <person name="Squares S."/>
            <person name="Squares R."/>
            <person name="Sulston J.E."/>
            <person name="Taylor K."/>
            <person name="Whitehead S."/>
            <person name="Barrell B.G."/>
        </authorList>
    </citation>
    <scope>NUCLEOTIDE SEQUENCE [LARGE SCALE GENOMIC DNA]</scope>
    <source>
        <strain>ATCC 25618 / H37Rv</strain>
    </source>
</reference>
<reference key="2">
    <citation type="journal article" date="2011" name="Mol. Cell. Proteomics">
        <title>Proteogenomic analysis of Mycobacterium tuberculosis by high resolution mass spectrometry.</title>
        <authorList>
            <person name="Kelkar D.S."/>
            <person name="Kumar D."/>
            <person name="Kumar P."/>
            <person name="Balakrishnan L."/>
            <person name="Muthusamy B."/>
            <person name="Yadav A.K."/>
            <person name="Shrivastava P."/>
            <person name="Marimuthu A."/>
            <person name="Anand S."/>
            <person name="Sundaram H."/>
            <person name="Kingsbury R."/>
            <person name="Harsha H.C."/>
            <person name="Nair B."/>
            <person name="Prasad T.S."/>
            <person name="Chauhan D.S."/>
            <person name="Katoch K."/>
            <person name="Katoch V.M."/>
            <person name="Kumar P."/>
            <person name="Chaerkady R."/>
            <person name="Ramachandran S."/>
            <person name="Dash D."/>
            <person name="Pandey A."/>
        </authorList>
    </citation>
    <scope>IDENTIFICATION BY MASS SPECTROMETRY [LARGE SCALE ANALYSIS]</scope>
    <source>
        <strain>ATCC 25618 / H37Rv</strain>
    </source>
</reference>
<proteinExistence type="evidence at protein level"/>
<organism>
    <name type="scientific">Mycobacterium tuberculosis (strain ATCC 25618 / H37Rv)</name>
    <dbReference type="NCBI Taxonomy" id="83332"/>
    <lineage>
        <taxon>Bacteria</taxon>
        <taxon>Bacillati</taxon>
        <taxon>Actinomycetota</taxon>
        <taxon>Actinomycetes</taxon>
        <taxon>Mycobacteriales</taxon>
        <taxon>Mycobacteriaceae</taxon>
        <taxon>Mycobacterium</taxon>
        <taxon>Mycobacterium tuberculosis complex</taxon>
    </lineage>
</organism>
<keyword id="KW-1185">Reference proteome</keyword>
<keyword id="KW-0732">Signal</keyword>
<sequence length="407" mass="44944">MRILAMTRAHNAGRTLAATLDSLAVFSDDIYVIDDRSTDDTAEILANHPAVTNVVRARPDLPPTPWLIPESAGLELLYRMADFCRPDWVMMVDADWLVETDIDLRAVLARTPDDIVALMCPMVSRWDDPEYPDLIPVMGTAEALRGPLWRWYPGLRAGGKLMHNPHWPANITDHGRIGQLPGVRLVHSGWSTLAERILRVEHYLRLDPDYRFNFGVAYDRSLLFGYALDEVDLLKADYRRRIRGDFDPLEPGGRLPIDREPRAIGRGYGPHAGGFHPGVDFATDPGTPVYAVASGAVSAIDEVDGLVSLTIARCELDVVYVFRPGDEGRLVLGDRIAAGAQLGTIGAQGESADGYLHFEVRTQDGHVNPVRYLANMGLRPWPPPGRLRAVSGSYPPATPCTITAEDR</sequence>
<name>Y3786_MYCTU</name>
<feature type="signal peptide" evidence="1">
    <location>
        <begin position="1"/>
        <end position="27"/>
    </location>
</feature>
<feature type="chain" id="PRO_0000014156" description="Uncharacterized protein Rv3786c">
    <location>
        <begin position="28"/>
        <end position="407"/>
    </location>
</feature>
<evidence type="ECO:0000255" key="1"/>
<gene>
    <name type="ordered locus">Rv3786c</name>
    <name type="ORF">MTCY13D12.20</name>
</gene>
<protein>
    <recommendedName>
        <fullName>Uncharacterized protein Rv3786c</fullName>
    </recommendedName>
</protein>
<dbReference type="EMBL" id="AL123456">
    <property type="protein sequence ID" value="CCP46615.1"/>
    <property type="molecule type" value="Genomic_DNA"/>
</dbReference>
<dbReference type="PIR" id="F70696">
    <property type="entry name" value="F70696"/>
</dbReference>
<dbReference type="RefSeq" id="NP_218303.1">
    <property type="nucleotide sequence ID" value="NC_000962.3"/>
</dbReference>
<dbReference type="RefSeq" id="WP_003420618.1">
    <property type="nucleotide sequence ID" value="NZ_NVQJ01000009.1"/>
</dbReference>
<dbReference type="SMR" id="P9WKW9"/>
<dbReference type="STRING" id="83332.Rv3786c"/>
<dbReference type="PaxDb" id="83332-Rv3786c"/>
<dbReference type="DNASU" id="886108"/>
<dbReference type="GeneID" id="886108"/>
<dbReference type="KEGG" id="mtu:Rv3786c"/>
<dbReference type="KEGG" id="mtv:RVBD_3786c"/>
<dbReference type="TubercuList" id="Rv3786c"/>
<dbReference type="eggNOG" id="COG0739">
    <property type="taxonomic scope" value="Bacteria"/>
</dbReference>
<dbReference type="eggNOG" id="COG1216">
    <property type="taxonomic scope" value="Bacteria"/>
</dbReference>
<dbReference type="InParanoid" id="P9WKW9"/>
<dbReference type="OrthoDB" id="1099523at2"/>
<dbReference type="Proteomes" id="UP000001584">
    <property type="component" value="Chromosome"/>
</dbReference>
<dbReference type="GO" id="GO:0009274">
    <property type="term" value="C:peptidoglycan-based cell wall"/>
    <property type="evidence" value="ECO:0007005"/>
    <property type="project" value="MTBBASE"/>
</dbReference>
<dbReference type="GO" id="GO:0005886">
    <property type="term" value="C:plasma membrane"/>
    <property type="evidence" value="ECO:0007005"/>
    <property type="project" value="MTBBASE"/>
</dbReference>
<dbReference type="GO" id="GO:0004222">
    <property type="term" value="F:metalloendopeptidase activity"/>
    <property type="evidence" value="ECO:0000318"/>
    <property type="project" value="GO_Central"/>
</dbReference>
<dbReference type="CDD" id="cd12797">
    <property type="entry name" value="M23_peptidase"/>
    <property type="match status" value="1"/>
</dbReference>
<dbReference type="Gene3D" id="2.70.70.10">
    <property type="entry name" value="Glucose Permease (Domain IIA)"/>
    <property type="match status" value="1"/>
</dbReference>
<dbReference type="Gene3D" id="3.90.550.10">
    <property type="entry name" value="Spore Coat Polysaccharide Biosynthesis Protein SpsA, Chain A"/>
    <property type="match status" value="1"/>
</dbReference>
<dbReference type="InterPro" id="IPR050570">
    <property type="entry name" value="Cell_wall_metabolism_enzyme"/>
</dbReference>
<dbReference type="InterPro" id="IPR011055">
    <property type="entry name" value="Dup_hybrid_motif"/>
</dbReference>
<dbReference type="InterPro" id="IPR029044">
    <property type="entry name" value="Nucleotide-diphossugar_trans"/>
</dbReference>
<dbReference type="InterPro" id="IPR016047">
    <property type="entry name" value="Peptidase_M23"/>
</dbReference>
<dbReference type="PANTHER" id="PTHR21666:SF289">
    <property type="entry name" value="L-ALA--D-GLU ENDOPEPTIDASE"/>
    <property type="match status" value="1"/>
</dbReference>
<dbReference type="PANTHER" id="PTHR21666">
    <property type="entry name" value="PEPTIDASE-RELATED"/>
    <property type="match status" value="1"/>
</dbReference>
<dbReference type="Pfam" id="PF13704">
    <property type="entry name" value="Glyco_tranf_2_4"/>
    <property type="match status" value="1"/>
</dbReference>
<dbReference type="Pfam" id="PF01551">
    <property type="entry name" value="Peptidase_M23"/>
    <property type="match status" value="1"/>
</dbReference>
<dbReference type="SUPFAM" id="SSF51261">
    <property type="entry name" value="Duplicated hybrid motif"/>
    <property type="match status" value="1"/>
</dbReference>
<dbReference type="SUPFAM" id="SSF53448">
    <property type="entry name" value="Nucleotide-diphospho-sugar transferases"/>
    <property type="match status" value="1"/>
</dbReference>